<evidence type="ECO:0000255" key="1">
    <source>
        <dbReference type="HAMAP-Rule" id="MF_01725"/>
    </source>
</evidence>
<proteinExistence type="inferred from homology"/>
<protein>
    <recommendedName>
        <fullName evidence="1">Zinc import ATP-binding protein ZnuC</fullName>
        <ecNumber evidence="1">7.2.2.20</ecNumber>
    </recommendedName>
</protein>
<keyword id="KW-0067">ATP-binding</keyword>
<keyword id="KW-0997">Cell inner membrane</keyword>
<keyword id="KW-1003">Cell membrane</keyword>
<keyword id="KW-0406">Ion transport</keyword>
<keyword id="KW-0472">Membrane</keyword>
<keyword id="KW-0547">Nucleotide-binding</keyword>
<keyword id="KW-1278">Translocase</keyword>
<keyword id="KW-0813">Transport</keyword>
<keyword id="KW-0862">Zinc</keyword>
<keyword id="KW-0864">Zinc transport</keyword>
<gene>
    <name evidence="1" type="primary">znuC</name>
    <name type="ordered locus">SG1263</name>
</gene>
<name>ZNUC_SODGM</name>
<sequence>MTDLVALEHIAVAFGRKAVLHDISFTLRHGHILTLLSPNGAGKSTLVWVVLSLIAPDARTIRRQPKLRVGYVPQKIHIDPTLPLTVERFMRLHPGVKKGDIGPALARVQAQHLHQAPMQKLSGGEMQWVLLARALLNSPQLLVLDEPTQGVDVNGQVALYDLIDNLRHTLGYGVLMVSHDLHLVMAKIDEMLCLNRHICCSGTPEVVSAHPDFIAMFGYRESSQLAIYRHHHNHRHDLQGEVMPAAQPHGECRHD</sequence>
<organism>
    <name type="scientific">Sodalis glossinidius (strain morsitans)</name>
    <dbReference type="NCBI Taxonomy" id="343509"/>
    <lineage>
        <taxon>Bacteria</taxon>
        <taxon>Pseudomonadati</taxon>
        <taxon>Pseudomonadota</taxon>
        <taxon>Gammaproteobacteria</taxon>
        <taxon>Enterobacterales</taxon>
        <taxon>Bruguierivoracaceae</taxon>
        <taxon>Sodalis</taxon>
    </lineage>
</organism>
<dbReference type="EC" id="7.2.2.20" evidence="1"/>
<dbReference type="EMBL" id="AP008232">
    <property type="protein sequence ID" value="BAE74538.1"/>
    <property type="molecule type" value="Genomic_DNA"/>
</dbReference>
<dbReference type="RefSeq" id="WP_011411092.1">
    <property type="nucleotide sequence ID" value="NC_007712.1"/>
</dbReference>
<dbReference type="SMR" id="Q2NTI7"/>
<dbReference type="STRING" id="343509.SG1263"/>
<dbReference type="KEGG" id="sgl:SG1263"/>
<dbReference type="eggNOG" id="COG1121">
    <property type="taxonomic scope" value="Bacteria"/>
</dbReference>
<dbReference type="HOGENOM" id="CLU_000604_1_11_6"/>
<dbReference type="OrthoDB" id="9780942at2"/>
<dbReference type="BioCyc" id="SGLO343509:SGP1_RS11240-MONOMER"/>
<dbReference type="Proteomes" id="UP000001932">
    <property type="component" value="Chromosome"/>
</dbReference>
<dbReference type="GO" id="GO:0005886">
    <property type="term" value="C:plasma membrane"/>
    <property type="evidence" value="ECO:0007669"/>
    <property type="project" value="UniProtKB-SubCell"/>
</dbReference>
<dbReference type="GO" id="GO:0015633">
    <property type="term" value="F:ABC-type zinc transporter activity"/>
    <property type="evidence" value="ECO:0007669"/>
    <property type="project" value="UniProtKB-EC"/>
</dbReference>
<dbReference type="GO" id="GO:0005524">
    <property type="term" value="F:ATP binding"/>
    <property type="evidence" value="ECO:0007669"/>
    <property type="project" value="UniProtKB-KW"/>
</dbReference>
<dbReference type="GO" id="GO:0016887">
    <property type="term" value="F:ATP hydrolysis activity"/>
    <property type="evidence" value="ECO:0007669"/>
    <property type="project" value="InterPro"/>
</dbReference>
<dbReference type="GO" id="GO:0010043">
    <property type="term" value="P:response to zinc ion"/>
    <property type="evidence" value="ECO:0007669"/>
    <property type="project" value="TreeGrafter"/>
</dbReference>
<dbReference type="FunFam" id="3.40.50.300:FF:000392">
    <property type="entry name" value="Zinc import ATP-binding protein ZnuC"/>
    <property type="match status" value="1"/>
</dbReference>
<dbReference type="Gene3D" id="3.40.50.300">
    <property type="entry name" value="P-loop containing nucleotide triphosphate hydrolases"/>
    <property type="match status" value="1"/>
</dbReference>
<dbReference type="InterPro" id="IPR003593">
    <property type="entry name" value="AAA+_ATPase"/>
</dbReference>
<dbReference type="InterPro" id="IPR003439">
    <property type="entry name" value="ABC_transporter-like_ATP-bd"/>
</dbReference>
<dbReference type="InterPro" id="IPR050153">
    <property type="entry name" value="Metal_Ion_Import_ABC"/>
</dbReference>
<dbReference type="InterPro" id="IPR027417">
    <property type="entry name" value="P-loop_NTPase"/>
</dbReference>
<dbReference type="NCBIfam" id="NF007090">
    <property type="entry name" value="PRK09544.1"/>
    <property type="match status" value="1"/>
</dbReference>
<dbReference type="PANTHER" id="PTHR42734">
    <property type="entry name" value="METAL TRANSPORT SYSTEM ATP-BINDING PROTEIN TM_0124-RELATED"/>
    <property type="match status" value="1"/>
</dbReference>
<dbReference type="PANTHER" id="PTHR42734:SF9">
    <property type="entry name" value="ZINC IMPORT ATP-BINDING PROTEIN ZNUC"/>
    <property type="match status" value="1"/>
</dbReference>
<dbReference type="Pfam" id="PF00005">
    <property type="entry name" value="ABC_tran"/>
    <property type="match status" value="1"/>
</dbReference>
<dbReference type="SMART" id="SM00382">
    <property type="entry name" value="AAA"/>
    <property type="match status" value="1"/>
</dbReference>
<dbReference type="SUPFAM" id="SSF52540">
    <property type="entry name" value="P-loop containing nucleoside triphosphate hydrolases"/>
    <property type="match status" value="1"/>
</dbReference>
<dbReference type="PROSITE" id="PS50893">
    <property type="entry name" value="ABC_TRANSPORTER_2"/>
    <property type="match status" value="1"/>
</dbReference>
<dbReference type="PROSITE" id="PS51298">
    <property type="entry name" value="ZNUC"/>
    <property type="match status" value="1"/>
</dbReference>
<reference key="1">
    <citation type="journal article" date="2006" name="Genome Res.">
        <title>Massive genome erosion and functional adaptations provide insights into the symbiotic lifestyle of Sodalis glossinidius in the tsetse host.</title>
        <authorList>
            <person name="Toh H."/>
            <person name="Weiss B.L."/>
            <person name="Perkin S.A.H."/>
            <person name="Yamashita A."/>
            <person name="Oshima K."/>
            <person name="Hattori M."/>
            <person name="Aksoy S."/>
        </authorList>
    </citation>
    <scope>NUCLEOTIDE SEQUENCE [LARGE SCALE GENOMIC DNA]</scope>
    <source>
        <strain>morsitans</strain>
    </source>
</reference>
<comment type="function">
    <text evidence="1">Part of the ABC transporter complex ZnuABC involved in zinc import. Responsible for energy coupling to the transport system.</text>
</comment>
<comment type="catalytic activity">
    <reaction evidence="1">
        <text>Zn(2+)(out) + ATP(in) + H2O(in) = Zn(2+)(in) + ADP(in) + phosphate(in) + H(+)(in)</text>
        <dbReference type="Rhea" id="RHEA:29795"/>
        <dbReference type="ChEBI" id="CHEBI:15377"/>
        <dbReference type="ChEBI" id="CHEBI:15378"/>
        <dbReference type="ChEBI" id="CHEBI:29105"/>
        <dbReference type="ChEBI" id="CHEBI:30616"/>
        <dbReference type="ChEBI" id="CHEBI:43474"/>
        <dbReference type="ChEBI" id="CHEBI:456216"/>
        <dbReference type="EC" id="7.2.2.20"/>
    </reaction>
</comment>
<comment type="subunit">
    <text evidence="1">The complex is composed of two ATP-binding proteins (ZnuC), two transmembrane proteins (ZnuB) and a solute-binding protein (ZnuA).</text>
</comment>
<comment type="subcellular location">
    <subcellularLocation>
        <location evidence="1">Cell inner membrane</location>
        <topology evidence="1">Peripheral membrane protein</topology>
    </subcellularLocation>
</comment>
<comment type="similarity">
    <text evidence="1">Belongs to the ABC transporter superfamily. Zinc importer (TC 3.A.1.15.5) family.</text>
</comment>
<accession>Q2NTI7</accession>
<feature type="chain" id="PRO_0000281557" description="Zinc import ATP-binding protein ZnuC">
    <location>
        <begin position="1"/>
        <end position="255"/>
    </location>
</feature>
<feature type="domain" description="ABC transporter" evidence="1">
    <location>
        <begin position="5"/>
        <end position="220"/>
    </location>
</feature>